<accession>G0S024</accession>
<accession>G0ZGU3</accession>
<proteinExistence type="evidence at protein level"/>
<protein>
    <recommendedName>
        <fullName evidence="5">Nucleoporin NIC96</fullName>
    </recommendedName>
    <alternativeName>
        <fullName>Nuclear pore protein NIC96</fullName>
    </alternativeName>
</protein>
<sequence length="1112" mass="121473">MSLIGNGPSVPPSSTKASLFSSPTTSANPTGGLFGSTTGGSSLFAPKTAGSTTTSTTQPTSTTGLGTSLFGTSTTANTQNTANAARPSLFTAGNSIFGTSTTQPGLGASSLTTAATSNQQAQQQQQQRQQHQQAAPTGALFDSLLARNKKQAEGETALGELPSLQLGLADLRQRLRKLGPSSDRPIEPGKAHYFLAASGVDPGAAVRDLGALGLQAKTERTAASVGPAAGPSGVSTTGFGTGLGEVDVDTYLSNLQTKTTLSMIADGLERSARDFDAFLEENVTLEWEAQRKRIYQHFGIKPRDSSVAGTTTAQPTATPSKDGQGTFGRSRRKASQPPPGERPAQRMSILGRSTMMRSVIGTPTRIGAHAPEFSDVEARKDSSGAAVASVDDRFLREKQAKLAEKIREFNDARQRGTPFYICRDLADLESKSGDRHGPHIVEAYRAVMEMVGEHPDAGEAPRERQFAKMYLDPNTQSANALAMRKQILKGATTFLEKQFWNEVNSLIAKYPQDANLGGLPDVVSKIKAYIRLRIARKTLVPDNVELQQINGEYVWAIVFYLLRAGFVTEAAQYVNSNQAHFRAIDRTFSGYINSYASSEERRLKRQMQDRCMSEYNQRIRNAPEGSIDPFRMACYKIIGRCDLSNRSLDGLQTDVNDWIWLQFNLARETDRSLELAGESYGLAELQASIREIGLKHFPKTAAEDTNGSFGMFFYLQILAGMFEQAIAYLYPFSYVDAVHFAIALTYYGLLRPVDAASAGNELLSHNTRSMPQINFGRMLGYYTRDFRAANPAAAVDYLVLICLNADEAAGGQQAQAALCHEALRELVLESREFSRLIGDIRPDGRRIRGVIEERGPLIALGQEDDFIRTITLQAASFADDNGRTTDAVLLYHLAEDYDTVVSIVSRALSEAISLEIGEDPMRLIPVKPRVTNAEGQVEEAAPGSSLSLAAIDDPVELAKAMMGMYERDHMFWQKIREPNRVACSVLLQMADIKSLVEQGRWAECLDKIRALDILPLTARGDPGTIRSYAARFPSLAQPVAINVPNLLMWTVLCCMRQRERLAGGQFAGNESTARLMMDELKQMTVDLMAYTSQLRYRLPPHLHEALARASAD</sequence>
<organism>
    <name type="scientific">Chaetomium thermophilum (strain DSM 1495 / CBS 144.50 / IMI 039719)</name>
    <name type="common">Thermochaetoides thermophila</name>
    <dbReference type="NCBI Taxonomy" id="759272"/>
    <lineage>
        <taxon>Eukaryota</taxon>
        <taxon>Fungi</taxon>
        <taxon>Dikarya</taxon>
        <taxon>Ascomycota</taxon>
        <taxon>Pezizomycotina</taxon>
        <taxon>Sordariomycetes</taxon>
        <taxon>Sordariomycetidae</taxon>
        <taxon>Sordariales</taxon>
        <taxon>Chaetomiaceae</taxon>
        <taxon>Thermochaetoides</taxon>
    </lineage>
</organism>
<evidence type="ECO:0000250" key="1">
    <source>
        <dbReference type="UniProtKB" id="P34077"/>
    </source>
</evidence>
<evidence type="ECO:0000255" key="2"/>
<evidence type="ECO:0000256" key="3">
    <source>
        <dbReference type="SAM" id="MobiDB-lite"/>
    </source>
</evidence>
<evidence type="ECO:0000269" key="4">
    <source>
    </source>
</evidence>
<evidence type="ECO:0000303" key="5">
    <source>
    </source>
</evidence>
<evidence type="ECO:0000305" key="6"/>
<evidence type="ECO:0007829" key="7">
    <source>
        <dbReference type="PDB" id="5HB2"/>
    </source>
</evidence>
<evidence type="ECO:0007829" key="8">
    <source>
        <dbReference type="PDB" id="5HB3"/>
    </source>
</evidence>
<evidence type="ECO:0007829" key="9">
    <source>
        <dbReference type="PDB" id="7MVY"/>
    </source>
</evidence>
<keyword id="KW-0002">3D-structure</keyword>
<keyword id="KW-0175">Coiled coil</keyword>
<keyword id="KW-0472">Membrane</keyword>
<keyword id="KW-0509">mRNA transport</keyword>
<keyword id="KW-0906">Nuclear pore complex</keyword>
<keyword id="KW-0539">Nucleus</keyword>
<keyword id="KW-0653">Protein transport</keyword>
<keyword id="KW-1185">Reference proteome</keyword>
<keyword id="KW-0811">Translocation</keyword>
<keyword id="KW-0813">Transport</keyword>
<reference key="1">
    <citation type="journal article" date="2011" name="Cell">
        <title>Insight into structure and assembly of the nuclear pore complex by utilizing the genome of a eukaryotic thermophile.</title>
        <authorList>
            <person name="Amlacher S."/>
            <person name="Sarges P."/>
            <person name="Flemming D."/>
            <person name="van Noort V."/>
            <person name="Kunze R."/>
            <person name="Devos D.P."/>
            <person name="Arumugam M."/>
            <person name="Bork P."/>
            <person name="Hurt E."/>
        </authorList>
    </citation>
    <scope>NUCLEOTIDE SEQUENCE [LARGE SCALE GENOMIC DNA]</scope>
    <scope>SUBUNIT</scope>
    <source>
        <strain>DSM 1495 / CBS 144.50 / IMI 039719</strain>
    </source>
</reference>
<comment type="function">
    <text evidence="1">Functions as a component of the nuclear pore complex (NPC). NPC components, collectively referred to as nucleoporins (NUPs), can play the role of both NPC structural components and of docking or interaction partners for transiently associated nuclear transport factors. NIC96, which is localized to the core of the NPC and the distal ring of the nuclear basket, is required for de novo assembly of NPCs.</text>
</comment>
<comment type="subunit">
    <text evidence="1 4">Component of the nuclear pore complex (NPC). NPC constitutes the exclusive means of nucleocytoplasmic transport. NPCs allow the passive diffusion of ions and small molecules and the active, nuclear transport receptor-mediated bidirectional transport of macromolecules such as proteins, RNAs, ribonucleoparticles (RNPs), and ribosomal subunits across the nuclear envelope. Due to its 8-fold rotational symmetry, all subunits are present with 8 copies or multiples thereof. Part of a tetrameric NUP192-NUP170-NIC96-NUP53 or NUP188-NUP170-NIC96-NUP53 module.</text>
</comment>
<comment type="interaction">
    <interactant intactId="EBI-4325173">
        <id>G0S024</id>
    </interactant>
    <interactant intactId="EBI-4325194">
        <id>G0SFH5</id>
        <label>NUP188</label>
    </interactant>
    <organismsDiffer>false</organismsDiffer>
    <experiments>5</experiments>
</comment>
<comment type="interaction">
    <interactant intactId="EBI-4325173">
        <id>G0S024</id>
    </interactant>
    <interactant intactId="EBI-4325187">
        <id>G0S4T0</id>
        <label>NUP192</label>
    </interactant>
    <organismsDiffer>false</organismsDiffer>
    <experiments>7</experiments>
</comment>
<comment type="interaction">
    <interactant intactId="EBI-4325173">
        <id>G0S024</id>
    </interactant>
    <interactant intactId="EBI-4325171">
        <id>G0S156</id>
        <label>NUP53</label>
    </interactant>
    <organismsDiffer>false</organismsDiffer>
    <experiments>13</experiments>
</comment>
<comment type="subcellular location">
    <subcellularLocation>
        <location evidence="1">Nucleus</location>
        <location evidence="1">Nuclear pore complex</location>
    </subcellularLocation>
    <subcellularLocation>
        <location evidence="1">Nucleus membrane</location>
        <topology evidence="1">Peripheral membrane protein</topology>
        <orientation evidence="1">Cytoplasmic side</orientation>
    </subcellularLocation>
    <subcellularLocation>
        <location evidence="1">Nucleus membrane</location>
        <topology evidence="1">Peripheral membrane protein</topology>
        <orientation evidence="1">Nucleoplasmic side</orientation>
    </subcellularLocation>
    <text evidence="1">Symmetric distribution.</text>
</comment>
<comment type="similarity">
    <text evidence="6">Belongs to the nucleoporin interacting component (NIC) family.</text>
</comment>
<name>NIC96_CHATD</name>
<feature type="chain" id="PRO_0000433197" description="Nucleoporin NIC96">
    <location>
        <begin position="1"/>
        <end position="1112"/>
    </location>
</feature>
<feature type="region of interest" description="Disordered" evidence="3">
    <location>
        <begin position="1"/>
        <end position="74"/>
    </location>
</feature>
<feature type="region of interest" description="Disordered" evidence="3">
    <location>
        <begin position="101"/>
        <end position="136"/>
    </location>
</feature>
<feature type="region of interest" description="Disordered" evidence="3">
    <location>
        <begin position="303"/>
        <end position="350"/>
    </location>
</feature>
<feature type="coiled-coil region" evidence="2">
    <location>
        <begin position="113"/>
        <end position="135"/>
    </location>
</feature>
<feature type="coiled-coil region" evidence="2">
    <location>
        <begin position="394"/>
        <end position="415"/>
    </location>
</feature>
<feature type="compositionally biased region" description="Polar residues" evidence="3">
    <location>
        <begin position="12"/>
        <end position="29"/>
    </location>
</feature>
<feature type="compositionally biased region" description="Low complexity" evidence="3">
    <location>
        <begin position="39"/>
        <end position="74"/>
    </location>
</feature>
<feature type="compositionally biased region" description="Polar residues" evidence="3">
    <location>
        <begin position="101"/>
        <end position="118"/>
    </location>
</feature>
<feature type="compositionally biased region" description="Low complexity" evidence="3">
    <location>
        <begin position="119"/>
        <end position="135"/>
    </location>
</feature>
<feature type="compositionally biased region" description="Low complexity" evidence="3">
    <location>
        <begin position="310"/>
        <end position="319"/>
    </location>
</feature>
<feature type="helix" evidence="9">
    <location>
        <begin position="248"/>
        <end position="253"/>
    </location>
</feature>
<feature type="helix" evidence="9">
    <location>
        <begin position="260"/>
        <end position="263"/>
    </location>
</feature>
<feature type="helix" evidence="9">
    <location>
        <begin position="266"/>
        <end position="298"/>
    </location>
</feature>
<feature type="helix" evidence="8">
    <location>
        <begin position="393"/>
        <end position="415"/>
    </location>
</feature>
<feature type="helix" evidence="8">
    <location>
        <begin position="421"/>
        <end position="430"/>
    </location>
</feature>
<feature type="turn" evidence="8">
    <location>
        <begin position="431"/>
        <end position="433"/>
    </location>
</feature>
<feature type="helix" evidence="8">
    <location>
        <begin position="437"/>
        <end position="451"/>
    </location>
</feature>
<feature type="helix" evidence="8">
    <location>
        <begin position="455"/>
        <end position="457"/>
    </location>
</feature>
<feature type="turn" evidence="7">
    <location>
        <begin position="463"/>
        <end position="466"/>
    </location>
</feature>
<feature type="helix" evidence="8">
    <location>
        <begin position="467"/>
        <end position="470"/>
    </location>
</feature>
<feature type="helix" evidence="8">
    <location>
        <begin position="478"/>
        <end position="509"/>
    </location>
</feature>
<feature type="helix" evidence="8">
    <location>
        <begin position="511"/>
        <end position="514"/>
    </location>
</feature>
<feature type="helix" evidence="8">
    <location>
        <begin position="522"/>
        <end position="535"/>
    </location>
</feature>
<feature type="helix" evidence="8">
    <location>
        <begin position="554"/>
        <end position="563"/>
    </location>
</feature>
<feature type="helix" evidence="8">
    <location>
        <begin position="567"/>
        <end position="575"/>
    </location>
</feature>
<feature type="helix" evidence="8">
    <location>
        <begin position="578"/>
        <end position="584"/>
    </location>
</feature>
<feature type="helix" evidence="8">
    <location>
        <begin position="588"/>
        <end position="596"/>
    </location>
</feature>
<feature type="strand" evidence="8">
    <location>
        <begin position="597"/>
        <end position="600"/>
    </location>
</feature>
<feature type="helix" evidence="8">
    <location>
        <begin position="605"/>
        <end position="618"/>
    </location>
</feature>
<feature type="turn" evidence="8">
    <location>
        <begin position="619"/>
        <end position="621"/>
    </location>
</feature>
<feature type="helix" evidence="8">
    <location>
        <begin position="629"/>
        <end position="639"/>
    </location>
</feature>
<feature type="strand" evidence="8">
    <location>
        <begin position="649"/>
        <end position="651"/>
    </location>
</feature>
<feature type="helix" evidence="8">
    <location>
        <begin position="655"/>
        <end position="664"/>
    </location>
</feature>
<feature type="strand" evidence="8">
    <location>
        <begin position="670"/>
        <end position="672"/>
    </location>
</feature>
<feature type="helix" evidence="8">
    <location>
        <begin position="676"/>
        <end position="678"/>
    </location>
</feature>
<feature type="helix" evidence="8">
    <location>
        <begin position="682"/>
        <end position="696"/>
    </location>
</feature>
<feature type="turn" evidence="8">
    <location>
        <begin position="701"/>
        <end position="703"/>
    </location>
</feature>
<feature type="strand" evidence="8">
    <location>
        <begin position="705"/>
        <end position="707"/>
    </location>
</feature>
<feature type="helix" evidence="8">
    <location>
        <begin position="709"/>
        <end position="718"/>
    </location>
</feature>
<feature type="helix" evidence="8">
    <location>
        <begin position="722"/>
        <end position="729"/>
    </location>
</feature>
<feature type="turn" evidence="8">
    <location>
        <begin position="730"/>
        <end position="732"/>
    </location>
</feature>
<feature type="helix" evidence="8">
    <location>
        <begin position="734"/>
        <end position="747"/>
    </location>
</feature>
<feature type="helix" evidence="8">
    <location>
        <begin position="755"/>
        <end position="757"/>
    </location>
</feature>
<feature type="strand" evidence="8">
    <location>
        <begin position="762"/>
        <end position="765"/>
    </location>
</feature>
<feature type="strand" evidence="8">
    <location>
        <begin position="771"/>
        <end position="773"/>
    </location>
</feature>
<feature type="helix" evidence="8">
    <location>
        <begin position="775"/>
        <end position="783"/>
    </location>
</feature>
<feature type="turn" evidence="8">
    <location>
        <begin position="784"/>
        <end position="789"/>
    </location>
</feature>
<feature type="helix" evidence="8">
    <location>
        <begin position="791"/>
        <end position="800"/>
    </location>
</feature>
<feature type="helix" evidence="8">
    <location>
        <begin position="801"/>
        <end position="804"/>
    </location>
</feature>
<feature type="turn" evidence="8">
    <location>
        <begin position="807"/>
        <end position="809"/>
    </location>
</feature>
<feature type="helix" evidence="8">
    <location>
        <begin position="812"/>
        <end position="829"/>
    </location>
</feature>
<feature type="helix" evidence="8">
    <location>
        <begin position="833"/>
        <end position="836"/>
    </location>
</feature>
<feature type="strand" evidence="8">
    <location>
        <begin position="838"/>
        <end position="840"/>
    </location>
</feature>
<feature type="strand" evidence="8">
    <location>
        <begin position="846"/>
        <end position="848"/>
    </location>
</feature>
<feature type="helix" evidence="8">
    <location>
        <begin position="850"/>
        <end position="853"/>
    </location>
</feature>
<feature type="helix" evidence="8">
    <location>
        <begin position="855"/>
        <end position="858"/>
    </location>
</feature>
<feature type="strand" evidence="7">
    <location>
        <begin position="859"/>
        <end position="862"/>
    </location>
</feature>
<feature type="helix" evidence="8">
    <location>
        <begin position="865"/>
        <end position="880"/>
    </location>
</feature>
<feature type="helix" evidence="8">
    <location>
        <begin position="884"/>
        <end position="893"/>
    </location>
</feature>
<feature type="helix" evidence="8">
    <location>
        <begin position="897"/>
        <end position="913"/>
    </location>
</feature>
<feature type="helix" evidence="8">
    <location>
        <begin position="946"/>
        <end position="949"/>
    </location>
</feature>
<feature type="helix" evidence="8">
    <location>
        <begin position="954"/>
        <end position="967"/>
    </location>
</feature>
<feature type="helix" evidence="8">
    <location>
        <begin position="969"/>
        <end position="972"/>
    </location>
</feature>
<feature type="helix" evidence="8">
    <location>
        <begin position="977"/>
        <end position="998"/>
    </location>
</feature>
<feature type="helix" evidence="8">
    <location>
        <begin position="1001"/>
        <end position="1011"/>
    </location>
</feature>
<feature type="helix" evidence="7">
    <location>
        <begin position="1016"/>
        <end position="1018"/>
    </location>
</feature>
<feature type="helix" evidence="8">
    <location>
        <begin position="1022"/>
        <end position="1029"/>
    </location>
</feature>
<feature type="helix" evidence="8">
    <location>
        <begin position="1032"/>
        <end position="1034"/>
    </location>
</feature>
<feature type="helix" evidence="8">
    <location>
        <begin position="1037"/>
        <end position="1040"/>
    </location>
</feature>
<feature type="helix" evidence="8">
    <location>
        <begin position="1043"/>
        <end position="1059"/>
    </location>
</feature>
<feature type="helix" evidence="8">
    <location>
        <begin position="1070"/>
        <end position="1074"/>
    </location>
</feature>
<feature type="helix" evidence="8">
    <location>
        <begin position="1076"/>
        <end position="1093"/>
    </location>
</feature>
<feature type="helix" evidence="8">
    <location>
        <begin position="1094"/>
        <end position="1097"/>
    </location>
</feature>
<feature type="helix" evidence="8">
    <location>
        <begin position="1103"/>
        <end position="1109"/>
    </location>
</feature>
<gene>
    <name type="primary">NIC96</name>
    <name type="ORF">CTHT_0008480</name>
</gene>
<dbReference type="EMBL" id="GL988037">
    <property type="protein sequence ID" value="EGS23185.1"/>
    <property type="molecule type" value="Genomic_DNA"/>
</dbReference>
<dbReference type="EMBL" id="JF276284">
    <property type="protein sequence ID" value="AEL00681.1"/>
    <property type="molecule type" value="Genomic_DNA"/>
</dbReference>
<dbReference type="RefSeq" id="XP_006691376.1">
    <property type="nucleotide sequence ID" value="XM_006691313.1"/>
</dbReference>
<dbReference type="PDB" id="5CWS">
    <property type="method" value="X-ray"/>
    <property type="resolution" value="3.77 A"/>
    <property type="chains" value="F/L=139-211"/>
</dbReference>
<dbReference type="PDB" id="5HB2">
    <property type="method" value="X-ray"/>
    <property type="resolution" value="3.30 A"/>
    <property type="chains" value="C=391-1112"/>
</dbReference>
<dbReference type="PDB" id="5HB3">
    <property type="method" value="X-ray"/>
    <property type="resolution" value="2.65 A"/>
    <property type="chains" value="A/C=391-1112"/>
</dbReference>
<dbReference type="PDB" id="7MVT">
    <property type="method" value="X-ray"/>
    <property type="resolution" value="3.60 A"/>
    <property type="chains" value="B=187-301"/>
</dbReference>
<dbReference type="PDB" id="7MVU">
    <property type="method" value="EM"/>
    <property type="resolution" value="3.77 A"/>
    <property type="chains" value="B=240-301"/>
</dbReference>
<dbReference type="PDB" id="7MVV">
    <property type="method" value="EM"/>
    <property type="resolution" value="3.22 A"/>
    <property type="chains" value="B=240-301"/>
</dbReference>
<dbReference type="PDB" id="7MVX">
    <property type="method" value="X-ray"/>
    <property type="resolution" value="4.35 A"/>
    <property type="chains" value="B=240-301"/>
</dbReference>
<dbReference type="PDB" id="7MVY">
    <property type="method" value="EM"/>
    <property type="resolution" value="2.39 A"/>
    <property type="chains" value="B=240-301"/>
</dbReference>
<dbReference type="PDB" id="7MVZ">
    <property type="method" value="EM"/>
    <property type="resolution" value="2.81 A"/>
    <property type="chains" value="B=240-301"/>
</dbReference>
<dbReference type="PDBsum" id="5CWS"/>
<dbReference type="PDBsum" id="5HB2"/>
<dbReference type="PDBsum" id="5HB3"/>
<dbReference type="PDBsum" id="7MVT"/>
<dbReference type="PDBsum" id="7MVU"/>
<dbReference type="PDBsum" id="7MVV"/>
<dbReference type="PDBsum" id="7MVX"/>
<dbReference type="PDBsum" id="7MVY"/>
<dbReference type="PDBsum" id="7MVZ"/>
<dbReference type="EMDB" id="EMD-24056"/>
<dbReference type="EMDB" id="EMD-24057"/>
<dbReference type="EMDB" id="EMD-24058"/>
<dbReference type="EMDB" id="EMD-24059"/>
<dbReference type="SMR" id="G0S024"/>
<dbReference type="DIP" id="DIP-61835N"/>
<dbReference type="IntAct" id="G0S024">
    <property type="interactions" value="6"/>
</dbReference>
<dbReference type="STRING" id="759272.G0S024"/>
<dbReference type="TCDB" id="1.I.1.1.2">
    <property type="family name" value="the nuclear pore complex (npc) family"/>
</dbReference>
<dbReference type="GeneID" id="18254886"/>
<dbReference type="KEGG" id="cthr:CTHT_0008480"/>
<dbReference type="eggNOG" id="KOG2168">
    <property type="taxonomic scope" value="Eukaryota"/>
</dbReference>
<dbReference type="HOGENOM" id="CLU_011846_0_0_1"/>
<dbReference type="OMA" id="VWLQFNL"/>
<dbReference type="OrthoDB" id="203824at2759"/>
<dbReference type="Proteomes" id="UP000008066">
    <property type="component" value="Unassembled WGS sequence"/>
</dbReference>
<dbReference type="GO" id="GO:0031965">
    <property type="term" value="C:nuclear membrane"/>
    <property type="evidence" value="ECO:0007669"/>
    <property type="project" value="UniProtKB-SubCell"/>
</dbReference>
<dbReference type="GO" id="GO:0005643">
    <property type="term" value="C:nuclear pore"/>
    <property type="evidence" value="ECO:0007669"/>
    <property type="project" value="UniProtKB-SubCell"/>
</dbReference>
<dbReference type="GO" id="GO:0017056">
    <property type="term" value="F:structural constituent of nuclear pore"/>
    <property type="evidence" value="ECO:0007669"/>
    <property type="project" value="InterPro"/>
</dbReference>
<dbReference type="GO" id="GO:0016973">
    <property type="term" value="P:poly(A)+ mRNA export from nucleus"/>
    <property type="evidence" value="ECO:0007669"/>
    <property type="project" value="TreeGrafter"/>
</dbReference>
<dbReference type="GO" id="GO:0006606">
    <property type="term" value="P:protein import into nucleus"/>
    <property type="evidence" value="ECO:0007669"/>
    <property type="project" value="TreeGrafter"/>
</dbReference>
<dbReference type="InterPro" id="IPR007231">
    <property type="entry name" value="Nucleoporin_int_Nup93/Nic96"/>
</dbReference>
<dbReference type="PANTHER" id="PTHR11225:SF4">
    <property type="entry name" value="NUCLEAR PORE COMPLEX PROTEIN NUP93"/>
    <property type="match status" value="1"/>
</dbReference>
<dbReference type="PANTHER" id="PTHR11225">
    <property type="entry name" value="NUCLEAR PORE COMPLEX PROTEIN NUP93 NUCLEOPORIN NUP93 DEAD EYE PROTEIN"/>
    <property type="match status" value="1"/>
</dbReference>
<dbReference type="Pfam" id="PF04097">
    <property type="entry name" value="Nic96"/>
    <property type="match status" value="1"/>
</dbReference>